<organism>
    <name type="scientific">Aspergillus terreus (strain NIH 2624 / FGSC A1156)</name>
    <dbReference type="NCBI Taxonomy" id="341663"/>
    <lineage>
        <taxon>Eukaryota</taxon>
        <taxon>Fungi</taxon>
        <taxon>Dikarya</taxon>
        <taxon>Ascomycota</taxon>
        <taxon>Pezizomycotina</taxon>
        <taxon>Eurotiomycetes</taxon>
        <taxon>Eurotiomycetidae</taxon>
        <taxon>Eurotiales</taxon>
        <taxon>Aspergillaceae</taxon>
        <taxon>Aspergillus</taxon>
        <taxon>Aspergillus subgen. Circumdati</taxon>
    </lineage>
</organism>
<gene>
    <name type="primary">rsm25</name>
    <name type="ORF">ATEG_05486</name>
</gene>
<comment type="subunit">
    <text evidence="1">Component of the mitochondrial small ribosomal subunit.</text>
</comment>
<comment type="subcellular location">
    <subcellularLocation>
        <location evidence="1">Mitochondrion</location>
    </subcellularLocation>
</comment>
<comment type="similarity">
    <text evidence="3">Belongs to the mitochondrion-specific ribosomal protein mS23 family.</text>
</comment>
<protein>
    <recommendedName>
        <fullName evidence="3">Small ribosomal subunit protein mS23</fullName>
    </recommendedName>
    <alternativeName>
        <fullName>37S ribosomal protein S25, mitochondrial</fullName>
    </alternativeName>
</protein>
<feature type="chain" id="PRO_0000343545" description="Small ribosomal subunit protein mS23">
    <location>
        <begin position="1"/>
        <end position="259"/>
    </location>
</feature>
<feature type="region of interest" description="Disordered" evidence="2">
    <location>
        <begin position="230"/>
        <end position="259"/>
    </location>
</feature>
<feature type="compositionally biased region" description="Polar residues" evidence="2">
    <location>
        <begin position="230"/>
        <end position="244"/>
    </location>
</feature>
<reference key="1">
    <citation type="submission" date="2005-09" db="EMBL/GenBank/DDBJ databases">
        <title>Annotation of the Aspergillus terreus NIH2624 genome.</title>
        <authorList>
            <person name="Birren B.W."/>
            <person name="Lander E.S."/>
            <person name="Galagan J.E."/>
            <person name="Nusbaum C."/>
            <person name="Devon K."/>
            <person name="Henn M."/>
            <person name="Ma L.-J."/>
            <person name="Jaffe D.B."/>
            <person name="Butler J."/>
            <person name="Alvarez P."/>
            <person name="Gnerre S."/>
            <person name="Grabherr M."/>
            <person name="Kleber M."/>
            <person name="Mauceli E.W."/>
            <person name="Brockman W."/>
            <person name="Rounsley S."/>
            <person name="Young S.K."/>
            <person name="LaButti K."/>
            <person name="Pushparaj V."/>
            <person name="DeCaprio D."/>
            <person name="Crawford M."/>
            <person name="Koehrsen M."/>
            <person name="Engels R."/>
            <person name="Montgomery P."/>
            <person name="Pearson M."/>
            <person name="Howarth C."/>
            <person name="Larson L."/>
            <person name="Luoma S."/>
            <person name="White J."/>
            <person name="Alvarado L."/>
            <person name="Kodira C.D."/>
            <person name="Zeng Q."/>
            <person name="Oleary S."/>
            <person name="Yandava C."/>
            <person name="Denning D.W."/>
            <person name="Nierman W.C."/>
            <person name="Milne T."/>
            <person name="Madden K."/>
        </authorList>
    </citation>
    <scope>NUCLEOTIDE SEQUENCE [LARGE SCALE GENOMIC DNA]</scope>
    <source>
        <strain>NIH 2624 / FGSC A1156</strain>
    </source>
</reference>
<proteinExistence type="inferred from homology"/>
<evidence type="ECO:0000250" key="1"/>
<evidence type="ECO:0000256" key="2">
    <source>
        <dbReference type="SAM" id="MobiDB-lite"/>
    </source>
</evidence>
<evidence type="ECO:0000305" key="3"/>
<accession>Q0CLE8</accession>
<keyword id="KW-0496">Mitochondrion</keyword>
<keyword id="KW-1185">Reference proteome</keyword>
<keyword id="KW-0687">Ribonucleoprotein</keyword>
<keyword id="KW-0689">Ribosomal protein</keyword>
<dbReference type="EMBL" id="CH476600">
    <property type="protein sequence ID" value="EAU34555.1"/>
    <property type="molecule type" value="Genomic_DNA"/>
</dbReference>
<dbReference type="RefSeq" id="XP_001214664.1">
    <property type="nucleotide sequence ID" value="XM_001214664.1"/>
</dbReference>
<dbReference type="SMR" id="Q0CLE8"/>
<dbReference type="STRING" id="341663.Q0CLE8"/>
<dbReference type="EnsemblFungi" id="EAU34555">
    <property type="protein sequence ID" value="EAU34555"/>
    <property type="gene ID" value="ATEG_05486"/>
</dbReference>
<dbReference type="GeneID" id="4320965"/>
<dbReference type="VEuPathDB" id="FungiDB:ATEG_05486"/>
<dbReference type="eggNOG" id="ENOG502RZQQ">
    <property type="taxonomic scope" value="Eukaryota"/>
</dbReference>
<dbReference type="HOGENOM" id="CLU_081350_0_0_1"/>
<dbReference type="OMA" id="ENWKIWA"/>
<dbReference type="OrthoDB" id="5542239at2759"/>
<dbReference type="Proteomes" id="UP000007963">
    <property type="component" value="Unassembled WGS sequence"/>
</dbReference>
<dbReference type="GO" id="GO:0005763">
    <property type="term" value="C:mitochondrial small ribosomal subunit"/>
    <property type="evidence" value="ECO:0007669"/>
    <property type="project" value="InterPro"/>
</dbReference>
<dbReference type="GO" id="GO:0003735">
    <property type="term" value="F:structural constituent of ribosome"/>
    <property type="evidence" value="ECO:0007669"/>
    <property type="project" value="InterPro"/>
</dbReference>
<dbReference type="InterPro" id="IPR016939">
    <property type="entry name" value="Ribosomal_mS23_fun"/>
</dbReference>
<dbReference type="PANTHER" id="PTHR37799">
    <property type="entry name" value="37S RIBOSOMAL PROTEIN S25, MITOCHONDRIAL"/>
    <property type="match status" value="1"/>
</dbReference>
<dbReference type="PANTHER" id="PTHR37799:SF1">
    <property type="entry name" value="SMALL RIBOSOMAL SUBUNIT PROTEIN MS23"/>
    <property type="match status" value="1"/>
</dbReference>
<dbReference type="Pfam" id="PF13741">
    <property type="entry name" value="MRP-S25"/>
    <property type="match status" value="1"/>
</dbReference>
<dbReference type="PIRSF" id="PIRSF029764">
    <property type="entry name" value="RSM25"/>
    <property type="match status" value="1"/>
</dbReference>
<sequence length="259" mass="30142">MGKYNLTALRVRQTALSQKAAGKIKRLPQWVDVIGDIPPAQVLVRNQPQQHQLVRQRVKTLPGASKPQVVFETEEKRVKPKKASRMFQPVQIKFEEDQLRKEFFRDHPWELARPRVLVETSGKDYERYDWSRLQQPGKRLDGESVVQRQLWLLNNVPDMTKSAAYDIARREFYRLRLQEDIERRVAAEEAEATGATFGPTRLEIGMELENQEYERWKQWAKMEAQIQEQRAASFTGSALPSSEESAPVDEETEKVPQQV</sequence>
<name>RT25_ASPTN</name>